<evidence type="ECO:0000255" key="1">
    <source>
        <dbReference type="HAMAP-Rule" id="MF_00141"/>
    </source>
</evidence>
<evidence type="ECO:0007829" key="2">
    <source>
        <dbReference type="PDB" id="1YBY"/>
    </source>
</evidence>
<reference key="1">
    <citation type="submission" date="2007-02" db="EMBL/GenBank/DDBJ databases">
        <title>Complete sequence of Clostridium thermocellum ATCC 27405.</title>
        <authorList>
            <consortium name="US DOE Joint Genome Institute"/>
            <person name="Copeland A."/>
            <person name="Lucas S."/>
            <person name="Lapidus A."/>
            <person name="Barry K."/>
            <person name="Detter J.C."/>
            <person name="Glavina del Rio T."/>
            <person name="Hammon N."/>
            <person name="Israni S."/>
            <person name="Dalin E."/>
            <person name="Tice H."/>
            <person name="Pitluck S."/>
            <person name="Chertkov O."/>
            <person name="Brettin T."/>
            <person name="Bruce D."/>
            <person name="Han C."/>
            <person name="Tapia R."/>
            <person name="Gilna P."/>
            <person name="Schmutz J."/>
            <person name="Larimer F."/>
            <person name="Land M."/>
            <person name="Hauser L."/>
            <person name="Kyrpides N."/>
            <person name="Mikhailova N."/>
            <person name="Wu J.H.D."/>
            <person name="Newcomb M."/>
            <person name="Richardson P."/>
        </authorList>
    </citation>
    <scope>NUCLEOTIDE SEQUENCE [LARGE SCALE GENOMIC DNA]</scope>
    <source>
        <strain>ATCC 27405 / DSM 1237 / JCM 9322 / NBRC 103400 / NCIMB 10682 / NRRL B-4536 / VPI 7372</strain>
    </source>
</reference>
<accession>A3DDQ3</accession>
<sequence>MISAGDFKNGVTFELDGQIFQVIEFQHVKPGKGAAFVRTKLKNIVTGATIEKTFNPTDKMPKAHIERKDMQYLYNDGDLYYFMDTETFEQLPLGKDKIGDALKFVKENEIVKVLSHKGNVFGIEPPNFVELEVTDTEPGFKGDTATGATKPAIVETGASIKVPLFVNKGDIIRIDTRTGEYMERV</sequence>
<comment type="function">
    <text evidence="1">Involved in peptide bond synthesis. Stimulates efficient translation and peptide-bond synthesis on native or reconstituted 70S ribosomes in vitro. Probably functions indirectly by altering the affinity of the ribosome for aminoacyl-tRNA, thus increasing their reactivity as acceptors for peptidyl transferase.</text>
</comment>
<comment type="pathway">
    <text evidence="1">Protein biosynthesis; polypeptide chain elongation.</text>
</comment>
<comment type="subcellular location">
    <subcellularLocation>
        <location evidence="1">Cytoplasm</location>
    </subcellularLocation>
</comment>
<comment type="similarity">
    <text evidence="1">Belongs to the elongation factor P family.</text>
</comment>
<keyword id="KW-0002">3D-structure</keyword>
<keyword id="KW-0963">Cytoplasm</keyword>
<keyword id="KW-0251">Elongation factor</keyword>
<keyword id="KW-0648">Protein biosynthesis</keyword>
<keyword id="KW-1185">Reference proteome</keyword>
<feature type="chain" id="PRO_1000010724" description="Elongation factor P">
    <location>
        <begin position="1"/>
        <end position="185"/>
    </location>
</feature>
<feature type="helix" evidence="2">
    <location>
        <begin position="4"/>
        <end position="6"/>
    </location>
</feature>
<feature type="strand" evidence="2">
    <location>
        <begin position="12"/>
        <end position="15"/>
    </location>
</feature>
<feature type="strand" evidence="2">
    <location>
        <begin position="18"/>
        <end position="28"/>
    </location>
</feature>
<feature type="strand" evidence="2">
    <location>
        <begin position="36"/>
        <end position="43"/>
    </location>
</feature>
<feature type="turn" evidence="2">
    <location>
        <begin position="44"/>
        <end position="46"/>
    </location>
</feature>
<feature type="strand" evidence="2">
    <location>
        <begin position="49"/>
        <end position="54"/>
    </location>
</feature>
<feature type="strand" evidence="2">
    <location>
        <begin position="66"/>
        <end position="76"/>
    </location>
</feature>
<feature type="strand" evidence="2">
    <location>
        <begin position="79"/>
        <end position="83"/>
    </location>
</feature>
<feature type="turn" evidence="2">
    <location>
        <begin position="85"/>
        <end position="87"/>
    </location>
</feature>
<feature type="strand" evidence="2">
    <location>
        <begin position="90"/>
        <end position="94"/>
    </location>
</feature>
<feature type="helix" evidence="2">
    <location>
        <begin position="95"/>
        <end position="98"/>
    </location>
</feature>
<feature type="turn" evidence="2">
    <location>
        <begin position="99"/>
        <end position="104"/>
    </location>
</feature>
<feature type="strand" evidence="2">
    <location>
        <begin position="110"/>
        <end position="116"/>
    </location>
</feature>
<feature type="strand" evidence="2">
    <location>
        <begin position="119"/>
        <end position="124"/>
    </location>
</feature>
<feature type="strand" evidence="2">
    <location>
        <begin position="127"/>
        <end position="135"/>
    </location>
</feature>
<feature type="strand" evidence="2">
    <location>
        <begin position="149"/>
        <end position="154"/>
    </location>
</feature>
<feature type="strand" evidence="2">
    <location>
        <begin position="159"/>
        <end position="163"/>
    </location>
</feature>
<feature type="strand" evidence="2">
    <location>
        <begin position="171"/>
        <end position="175"/>
    </location>
</feature>
<feature type="turn" evidence="2">
    <location>
        <begin position="176"/>
        <end position="179"/>
    </location>
</feature>
<feature type="strand" evidence="2">
    <location>
        <begin position="180"/>
        <end position="184"/>
    </location>
</feature>
<protein>
    <recommendedName>
        <fullName evidence="1">Elongation factor P</fullName>
        <shortName evidence="1">EF-P</shortName>
    </recommendedName>
</protein>
<gene>
    <name evidence="1" type="primary">efp</name>
    <name type="ordered locus">Cthe_0847</name>
</gene>
<organism>
    <name type="scientific">Acetivibrio thermocellus (strain ATCC 27405 / DSM 1237 / JCM 9322 / NBRC 103400 / NCIMB 10682 / NRRL B-4536 / VPI 7372)</name>
    <name type="common">Clostridium thermocellum</name>
    <dbReference type="NCBI Taxonomy" id="203119"/>
    <lineage>
        <taxon>Bacteria</taxon>
        <taxon>Bacillati</taxon>
        <taxon>Bacillota</taxon>
        <taxon>Clostridia</taxon>
        <taxon>Eubacteriales</taxon>
        <taxon>Oscillospiraceae</taxon>
        <taxon>Acetivibrio</taxon>
    </lineage>
</organism>
<proteinExistence type="evidence at protein level"/>
<name>EFP_ACET2</name>
<dbReference type="EMBL" id="CP000568">
    <property type="protein sequence ID" value="ABN52082.1"/>
    <property type="molecule type" value="Genomic_DNA"/>
</dbReference>
<dbReference type="RefSeq" id="WP_003517139.1">
    <property type="nucleotide sequence ID" value="NC_009012.1"/>
</dbReference>
<dbReference type="PDB" id="1YBY">
    <property type="method" value="X-ray"/>
    <property type="resolution" value="1.95 A"/>
    <property type="chains" value="A/B=1-185"/>
</dbReference>
<dbReference type="PDBsum" id="1YBY"/>
<dbReference type="SMR" id="A3DDQ3"/>
<dbReference type="STRING" id="203119.Cthe_0847"/>
<dbReference type="GeneID" id="35805806"/>
<dbReference type="KEGG" id="cth:Cthe_0847"/>
<dbReference type="eggNOG" id="COG0231">
    <property type="taxonomic scope" value="Bacteria"/>
</dbReference>
<dbReference type="HOGENOM" id="CLU_074944_0_1_9"/>
<dbReference type="OrthoDB" id="9801844at2"/>
<dbReference type="UniPathway" id="UPA00345"/>
<dbReference type="EvolutionaryTrace" id="A3DDQ3"/>
<dbReference type="Proteomes" id="UP000002145">
    <property type="component" value="Chromosome"/>
</dbReference>
<dbReference type="GO" id="GO:0005737">
    <property type="term" value="C:cytoplasm"/>
    <property type="evidence" value="ECO:0007669"/>
    <property type="project" value="UniProtKB-SubCell"/>
</dbReference>
<dbReference type="GO" id="GO:0003746">
    <property type="term" value="F:translation elongation factor activity"/>
    <property type="evidence" value="ECO:0007669"/>
    <property type="project" value="UniProtKB-UniRule"/>
</dbReference>
<dbReference type="GO" id="GO:0043043">
    <property type="term" value="P:peptide biosynthetic process"/>
    <property type="evidence" value="ECO:0007669"/>
    <property type="project" value="InterPro"/>
</dbReference>
<dbReference type="CDD" id="cd04470">
    <property type="entry name" value="S1_EF-P_repeat_1"/>
    <property type="match status" value="1"/>
</dbReference>
<dbReference type="CDD" id="cd05794">
    <property type="entry name" value="S1_EF-P_repeat_2"/>
    <property type="match status" value="1"/>
</dbReference>
<dbReference type="FunFam" id="2.30.30.30:FF:000003">
    <property type="entry name" value="Elongation factor P"/>
    <property type="match status" value="1"/>
</dbReference>
<dbReference type="FunFam" id="2.40.50.140:FF:000004">
    <property type="entry name" value="Elongation factor P"/>
    <property type="match status" value="1"/>
</dbReference>
<dbReference type="FunFam" id="2.40.50.140:FF:000009">
    <property type="entry name" value="Elongation factor P"/>
    <property type="match status" value="1"/>
</dbReference>
<dbReference type="Gene3D" id="2.30.30.30">
    <property type="match status" value="1"/>
</dbReference>
<dbReference type="Gene3D" id="2.40.50.140">
    <property type="entry name" value="Nucleic acid-binding proteins"/>
    <property type="match status" value="2"/>
</dbReference>
<dbReference type="HAMAP" id="MF_00141">
    <property type="entry name" value="EF_P"/>
    <property type="match status" value="1"/>
</dbReference>
<dbReference type="InterPro" id="IPR015365">
    <property type="entry name" value="Elong-fact-P_C"/>
</dbReference>
<dbReference type="InterPro" id="IPR012340">
    <property type="entry name" value="NA-bd_OB-fold"/>
</dbReference>
<dbReference type="InterPro" id="IPR014722">
    <property type="entry name" value="Rib_uL2_dom2"/>
</dbReference>
<dbReference type="InterPro" id="IPR020599">
    <property type="entry name" value="Transl_elong_fac_P/YeiP"/>
</dbReference>
<dbReference type="InterPro" id="IPR013185">
    <property type="entry name" value="Transl_elong_KOW-like"/>
</dbReference>
<dbReference type="InterPro" id="IPR001059">
    <property type="entry name" value="Transl_elong_P/YeiP_cen"/>
</dbReference>
<dbReference type="InterPro" id="IPR013852">
    <property type="entry name" value="Transl_elong_P/YeiP_CS"/>
</dbReference>
<dbReference type="InterPro" id="IPR011768">
    <property type="entry name" value="Transl_elongation_fac_P"/>
</dbReference>
<dbReference type="InterPro" id="IPR008991">
    <property type="entry name" value="Translation_prot_SH3-like_sf"/>
</dbReference>
<dbReference type="NCBIfam" id="TIGR00038">
    <property type="entry name" value="efp"/>
    <property type="match status" value="1"/>
</dbReference>
<dbReference type="NCBIfam" id="NF001810">
    <property type="entry name" value="PRK00529.1"/>
    <property type="match status" value="1"/>
</dbReference>
<dbReference type="PANTHER" id="PTHR30053">
    <property type="entry name" value="ELONGATION FACTOR P"/>
    <property type="match status" value="1"/>
</dbReference>
<dbReference type="PANTHER" id="PTHR30053:SF12">
    <property type="entry name" value="ELONGATION FACTOR P (EF-P) FAMILY PROTEIN"/>
    <property type="match status" value="1"/>
</dbReference>
<dbReference type="Pfam" id="PF01132">
    <property type="entry name" value="EFP"/>
    <property type="match status" value="1"/>
</dbReference>
<dbReference type="Pfam" id="PF08207">
    <property type="entry name" value="EFP_N"/>
    <property type="match status" value="1"/>
</dbReference>
<dbReference type="Pfam" id="PF09285">
    <property type="entry name" value="Elong-fact-P_C"/>
    <property type="match status" value="1"/>
</dbReference>
<dbReference type="PIRSF" id="PIRSF005901">
    <property type="entry name" value="EF-P"/>
    <property type="match status" value="1"/>
</dbReference>
<dbReference type="SMART" id="SM01185">
    <property type="entry name" value="EFP"/>
    <property type="match status" value="1"/>
</dbReference>
<dbReference type="SMART" id="SM00841">
    <property type="entry name" value="Elong-fact-P_C"/>
    <property type="match status" value="1"/>
</dbReference>
<dbReference type="SUPFAM" id="SSF50249">
    <property type="entry name" value="Nucleic acid-binding proteins"/>
    <property type="match status" value="2"/>
</dbReference>
<dbReference type="SUPFAM" id="SSF50104">
    <property type="entry name" value="Translation proteins SH3-like domain"/>
    <property type="match status" value="1"/>
</dbReference>
<dbReference type="PROSITE" id="PS01275">
    <property type="entry name" value="EFP"/>
    <property type="match status" value="1"/>
</dbReference>